<evidence type="ECO:0000255" key="1">
    <source>
        <dbReference type="HAMAP-Rule" id="MF_00203"/>
    </source>
</evidence>
<reference key="1">
    <citation type="journal article" date="2005" name="Proc. Natl. Acad. Sci. U.S.A.">
        <title>Complete genome sequence of Vibrio fischeri: a symbiotic bacterium with pathogenic congeners.</title>
        <authorList>
            <person name="Ruby E.G."/>
            <person name="Urbanowski M."/>
            <person name="Campbell J."/>
            <person name="Dunn A."/>
            <person name="Faini M."/>
            <person name="Gunsalus R."/>
            <person name="Lostroh P."/>
            <person name="Lupp C."/>
            <person name="McCann J."/>
            <person name="Millikan D."/>
            <person name="Schaefer A."/>
            <person name="Stabb E."/>
            <person name="Stevens A."/>
            <person name="Visick K."/>
            <person name="Whistler C."/>
            <person name="Greenberg E.P."/>
        </authorList>
    </citation>
    <scope>NUCLEOTIDE SEQUENCE [LARGE SCALE GENOMIC DNA]</scope>
    <source>
        <strain>ATCC 700601 / ES114</strain>
    </source>
</reference>
<protein>
    <recommendedName>
        <fullName evidence="1">UvrABC system protein C</fullName>
        <shortName evidence="1">Protein UvrC</shortName>
    </recommendedName>
    <alternativeName>
        <fullName evidence="1">Excinuclease ABC subunit C</fullName>
    </alternativeName>
</protein>
<gene>
    <name evidence="1" type="primary">uvrC</name>
    <name type="ordered locus">VF_1626</name>
</gene>
<dbReference type="EMBL" id="CP000020">
    <property type="protein sequence ID" value="AAW86121.1"/>
    <property type="molecule type" value="Genomic_DNA"/>
</dbReference>
<dbReference type="RefSeq" id="WP_011262189.1">
    <property type="nucleotide sequence ID" value="NC_006840.2"/>
</dbReference>
<dbReference type="RefSeq" id="YP_205009.1">
    <property type="nucleotide sequence ID" value="NC_006840.2"/>
</dbReference>
<dbReference type="SMR" id="Q5E4C5"/>
<dbReference type="STRING" id="312309.VF_1626"/>
<dbReference type="EnsemblBacteria" id="AAW86121">
    <property type="protein sequence ID" value="AAW86121"/>
    <property type="gene ID" value="VF_1626"/>
</dbReference>
<dbReference type="GeneID" id="54164316"/>
<dbReference type="KEGG" id="vfi:VF_1626"/>
<dbReference type="PATRIC" id="fig|312309.11.peg.1647"/>
<dbReference type="eggNOG" id="COG0322">
    <property type="taxonomic scope" value="Bacteria"/>
</dbReference>
<dbReference type="HOGENOM" id="CLU_014841_3_2_6"/>
<dbReference type="OrthoDB" id="9804933at2"/>
<dbReference type="Proteomes" id="UP000000537">
    <property type="component" value="Chromosome I"/>
</dbReference>
<dbReference type="GO" id="GO:0005737">
    <property type="term" value="C:cytoplasm"/>
    <property type="evidence" value="ECO:0007669"/>
    <property type="project" value="UniProtKB-SubCell"/>
</dbReference>
<dbReference type="GO" id="GO:0009380">
    <property type="term" value="C:excinuclease repair complex"/>
    <property type="evidence" value="ECO:0007669"/>
    <property type="project" value="InterPro"/>
</dbReference>
<dbReference type="GO" id="GO:0003677">
    <property type="term" value="F:DNA binding"/>
    <property type="evidence" value="ECO:0007669"/>
    <property type="project" value="UniProtKB-UniRule"/>
</dbReference>
<dbReference type="GO" id="GO:0009381">
    <property type="term" value="F:excinuclease ABC activity"/>
    <property type="evidence" value="ECO:0007669"/>
    <property type="project" value="UniProtKB-UniRule"/>
</dbReference>
<dbReference type="GO" id="GO:0006289">
    <property type="term" value="P:nucleotide-excision repair"/>
    <property type="evidence" value="ECO:0007669"/>
    <property type="project" value="UniProtKB-UniRule"/>
</dbReference>
<dbReference type="GO" id="GO:0009432">
    <property type="term" value="P:SOS response"/>
    <property type="evidence" value="ECO:0007669"/>
    <property type="project" value="UniProtKB-UniRule"/>
</dbReference>
<dbReference type="CDD" id="cd10434">
    <property type="entry name" value="GIY-YIG_UvrC_Cho"/>
    <property type="match status" value="1"/>
</dbReference>
<dbReference type="FunFam" id="1.10.150.20:FF:000005">
    <property type="entry name" value="UvrABC system protein C"/>
    <property type="match status" value="1"/>
</dbReference>
<dbReference type="FunFam" id="3.30.420.340:FF:000001">
    <property type="entry name" value="UvrABC system protein C"/>
    <property type="match status" value="1"/>
</dbReference>
<dbReference type="FunFam" id="3.40.1440.10:FF:000001">
    <property type="entry name" value="UvrABC system protein C"/>
    <property type="match status" value="1"/>
</dbReference>
<dbReference type="FunFam" id="4.10.860.10:FF:000002">
    <property type="entry name" value="UvrABC system protein C"/>
    <property type="match status" value="1"/>
</dbReference>
<dbReference type="Gene3D" id="1.10.150.20">
    <property type="entry name" value="5' to 3' exonuclease, C-terminal subdomain"/>
    <property type="match status" value="1"/>
</dbReference>
<dbReference type="Gene3D" id="3.40.1440.10">
    <property type="entry name" value="GIY-YIG endonuclease"/>
    <property type="match status" value="1"/>
</dbReference>
<dbReference type="Gene3D" id="4.10.860.10">
    <property type="entry name" value="UVR domain"/>
    <property type="match status" value="1"/>
</dbReference>
<dbReference type="Gene3D" id="3.30.420.340">
    <property type="entry name" value="UvrC, RNAse H endonuclease domain"/>
    <property type="match status" value="1"/>
</dbReference>
<dbReference type="HAMAP" id="MF_00203">
    <property type="entry name" value="UvrC"/>
    <property type="match status" value="1"/>
</dbReference>
<dbReference type="InterPro" id="IPR000305">
    <property type="entry name" value="GIY-YIG_endonuc"/>
</dbReference>
<dbReference type="InterPro" id="IPR035901">
    <property type="entry name" value="GIY-YIG_endonuc_sf"/>
</dbReference>
<dbReference type="InterPro" id="IPR047296">
    <property type="entry name" value="GIY-YIG_UvrC_Cho"/>
</dbReference>
<dbReference type="InterPro" id="IPR003583">
    <property type="entry name" value="Hlx-hairpin-Hlx_DNA-bd_motif"/>
</dbReference>
<dbReference type="InterPro" id="IPR010994">
    <property type="entry name" value="RuvA_2-like"/>
</dbReference>
<dbReference type="InterPro" id="IPR001943">
    <property type="entry name" value="UVR_dom"/>
</dbReference>
<dbReference type="InterPro" id="IPR036876">
    <property type="entry name" value="UVR_dom_sf"/>
</dbReference>
<dbReference type="InterPro" id="IPR050066">
    <property type="entry name" value="UvrABC_protein_C"/>
</dbReference>
<dbReference type="InterPro" id="IPR004791">
    <property type="entry name" value="UvrC"/>
</dbReference>
<dbReference type="InterPro" id="IPR001162">
    <property type="entry name" value="UvrC_RNase_H_dom"/>
</dbReference>
<dbReference type="InterPro" id="IPR038476">
    <property type="entry name" value="UvrC_RNase_H_dom_sf"/>
</dbReference>
<dbReference type="NCBIfam" id="NF001824">
    <property type="entry name" value="PRK00558.1-5"/>
    <property type="match status" value="1"/>
</dbReference>
<dbReference type="NCBIfam" id="TIGR00194">
    <property type="entry name" value="uvrC"/>
    <property type="match status" value="1"/>
</dbReference>
<dbReference type="PANTHER" id="PTHR30562:SF1">
    <property type="entry name" value="UVRABC SYSTEM PROTEIN C"/>
    <property type="match status" value="1"/>
</dbReference>
<dbReference type="PANTHER" id="PTHR30562">
    <property type="entry name" value="UVRC/OXIDOREDUCTASE"/>
    <property type="match status" value="1"/>
</dbReference>
<dbReference type="Pfam" id="PF01541">
    <property type="entry name" value="GIY-YIG"/>
    <property type="match status" value="1"/>
</dbReference>
<dbReference type="Pfam" id="PF14520">
    <property type="entry name" value="HHH_5"/>
    <property type="match status" value="1"/>
</dbReference>
<dbReference type="Pfam" id="PF02151">
    <property type="entry name" value="UVR"/>
    <property type="match status" value="1"/>
</dbReference>
<dbReference type="Pfam" id="PF22920">
    <property type="entry name" value="UvrC_RNaseH"/>
    <property type="match status" value="1"/>
</dbReference>
<dbReference type="Pfam" id="PF08459">
    <property type="entry name" value="UvrC_RNaseH_dom"/>
    <property type="match status" value="1"/>
</dbReference>
<dbReference type="SMART" id="SM00465">
    <property type="entry name" value="GIYc"/>
    <property type="match status" value="1"/>
</dbReference>
<dbReference type="SMART" id="SM00278">
    <property type="entry name" value="HhH1"/>
    <property type="match status" value="2"/>
</dbReference>
<dbReference type="SUPFAM" id="SSF46600">
    <property type="entry name" value="C-terminal UvrC-binding domain of UvrB"/>
    <property type="match status" value="1"/>
</dbReference>
<dbReference type="SUPFAM" id="SSF82771">
    <property type="entry name" value="GIY-YIG endonuclease"/>
    <property type="match status" value="1"/>
</dbReference>
<dbReference type="SUPFAM" id="SSF47781">
    <property type="entry name" value="RuvA domain 2-like"/>
    <property type="match status" value="1"/>
</dbReference>
<dbReference type="PROSITE" id="PS50164">
    <property type="entry name" value="GIY_YIG"/>
    <property type="match status" value="1"/>
</dbReference>
<dbReference type="PROSITE" id="PS50151">
    <property type="entry name" value="UVR"/>
    <property type="match status" value="1"/>
</dbReference>
<dbReference type="PROSITE" id="PS50165">
    <property type="entry name" value="UVRC"/>
    <property type="match status" value="1"/>
</dbReference>
<organism>
    <name type="scientific">Aliivibrio fischeri (strain ATCC 700601 / ES114)</name>
    <name type="common">Vibrio fischeri</name>
    <dbReference type="NCBI Taxonomy" id="312309"/>
    <lineage>
        <taxon>Bacteria</taxon>
        <taxon>Pseudomonadati</taxon>
        <taxon>Pseudomonadota</taxon>
        <taxon>Gammaproteobacteria</taxon>
        <taxon>Vibrionales</taxon>
        <taxon>Vibrionaceae</taxon>
        <taxon>Aliivibrio</taxon>
    </lineage>
</organism>
<comment type="function">
    <text evidence="1">The UvrABC repair system catalyzes the recognition and processing of DNA lesions. UvrC both incises the 5' and 3' sides of the lesion. The N-terminal half is responsible for the 3' incision and the C-terminal half is responsible for the 5' incision.</text>
</comment>
<comment type="subunit">
    <text evidence="1">Interacts with UvrB in an incision complex.</text>
</comment>
<comment type="subcellular location">
    <subcellularLocation>
        <location evidence="1">Cytoplasm</location>
    </subcellularLocation>
</comment>
<comment type="similarity">
    <text evidence="1">Belongs to the UvrC family.</text>
</comment>
<name>UVRC_ALIF1</name>
<sequence length="608" mass="69142">MPSFDSKAFLKSVTHQPGVYRMYNAEADVIYVGKAKDLKKRLSSYFRSNVPSEKTKALVSHIHQVDVTVTHSETEALILEHNYIKQYLPKYNVLLRDDKSYPYIFISQHKHPRISIHRGVKRKKGEYFGPYPDSGAVRESLHLIQKLFPIRQCEDSVYANRHRPCLMHQIGRCLAPCVKGIVSDEEYKEQTDFIRLFLQGKDRQVIQTLVKQMESASQSLNFEKAAIIRDQIQAMRRVQEQQYVSDDSGDDLDVLGFAIENGLACVHLLMIRQGKILGSRSFFPKIPANTDKEEVFLSFLTQYYLNHTQGRTIPNRVVTSFEFNSEDLERALTELSGRKVIFQLNPKGIKGRYLKLADTNALTALTSKSNHKLTMYQRFKQLEEALVLSSIQRMECFDISHTMGEKTVASCVVFNQEGPVKSEYRRYNIAGITGGDDYAAMAQVLERRYSKQLDIDKIPDIIFIDGGKGQLNRAYEVISKHWEDWPKQPLLLGIAKGVTRKHGLETLVKISGEEFSMPSDSPALHLIQHIRDESHNHAIGGHRAQRAKVRKTSTLQNIDGVGPKRRQALLQYLGGLQELKSASVEEIAKVPGISHSLAEKIHDALKHG</sequence>
<accession>Q5E4C5</accession>
<proteinExistence type="inferred from homology"/>
<keyword id="KW-0963">Cytoplasm</keyword>
<keyword id="KW-0227">DNA damage</keyword>
<keyword id="KW-0228">DNA excision</keyword>
<keyword id="KW-0234">DNA repair</keyword>
<keyword id="KW-0267">Excision nuclease</keyword>
<keyword id="KW-1185">Reference proteome</keyword>
<keyword id="KW-0742">SOS response</keyword>
<feature type="chain" id="PRO_0000227490" description="UvrABC system protein C">
    <location>
        <begin position="1"/>
        <end position="608"/>
    </location>
</feature>
<feature type="domain" description="GIY-YIG" evidence="1">
    <location>
        <begin position="15"/>
        <end position="93"/>
    </location>
</feature>
<feature type="domain" description="UVR" evidence="1">
    <location>
        <begin position="203"/>
        <end position="238"/>
    </location>
</feature>